<dbReference type="EMBL" id="CP000668">
    <property type="protein sequence ID" value="ABP38579.1"/>
    <property type="molecule type" value="Genomic_DNA"/>
</dbReference>
<dbReference type="RefSeq" id="WP_002209014.1">
    <property type="nucleotide sequence ID" value="NZ_CP009715.1"/>
</dbReference>
<dbReference type="SMR" id="A4TH16"/>
<dbReference type="GeneID" id="57974369"/>
<dbReference type="KEGG" id="ypp:YPDSF_0157"/>
<dbReference type="PATRIC" id="fig|386656.14.peg.408"/>
<dbReference type="GO" id="GO:0022625">
    <property type="term" value="C:cytosolic large ribosomal subunit"/>
    <property type="evidence" value="ECO:0007669"/>
    <property type="project" value="TreeGrafter"/>
</dbReference>
<dbReference type="GO" id="GO:0003735">
    <property type="term" value="F:structural constituent of ribosome"/>
    <property type="evidence" value="ECO:0007669"/>
    <property type="project" value="InterPro"/>
</dbReference>
<dbReference type="GO" id="GO:0006412">
    <property type="term" value="P:translation"/>
    <property type="evidence" value="ECO:0007669"/>
    <property type="project" value="UniProtKB-UniRule"/>
</dbReference>
<dbReference type="FunFam" id="3.90.1030.10:FF:000001">
    <property type="entry name" value="50S ribosomal protein L17"/>
    <property type="match status" value="1"/>
</dbReference>
<dbReference type="Gene3D" id="3.90.1030.10">
    <property type="entry name" value="Ribosomal protein L17"/>
    <property type="match status" value="1"/>
</dbReference>
<dbReference type="HAMAP" id="MF_01368">
    <property type="entry name" value="Ribosomal_bL17"/>
    <property type="match status" value="1"/>
</dbReference>
<dbReference type="InterPro" id="IPR000456">
    <property type="entry name" value="Ribosomal_bL17"/>
</dbReference>
<dbReference type="InterPro" id="IPR047859">
    <property type="entry name" value="Ribosomal_bL17_CS"/>
</dbReference>
<dbReference type="InterPro" id="IPR036373">
    <property type="entry name" value="Ribosomal_bL17_sf"/>
</dbReference>
<dbReference type="NCBIfam" id="TIGR00059">
    <property type="entry name" value="L17"/>
    <property type="match status" value="1"/>
</dbReference>
<dbReference type="PANTHER" id="PTHR14413:SF16">
    <property type="entry name" value="LARGE RIBOSOMAL SUBUNIT PROTEIN BL17M"/>
    <property type="match status" value="1"/>
</dbReference>
<dbReference type="PANTHER" id="PTHR14413">
    <property type="entry name" value="RIBOSOMAL PROTEIN L17"/>
    <property type="match status" value="1"/>
</dbReference>
<dbReference type="Pfam" id="PF01196">
    <property type="entry name" value="Ribosomal_L17"/>
    <property type="match status" value="1"/>
</dbReference>
<dbReference type="SUPFAM" id="SSF64263">
    <property type="entry name" value="Prokaryotic ribosomal protein L17"/>
    <property type="match status" value="1"/>
</dbReference>
<dbReference type="PROSITE" id="PS01167">
    <property type="entry name" value="RIBOSOMAL_L17"/>
    <property type="match status" value="1"/>
</dbReference>
<reference key="1">
    <citation type="submission" date="2007-02" db="EMBL/GenBank/DDBJ databases">
        <title>Complete sequence of chromosome of Yersinia pestis Pestoides F.</title>
        <authorList>
            <consortium name="US DOE Joint Genome Institute"/>
            <person name="Copeland A."/>
            <person name="Lucas S."/>
            <person name="Lapidus A."/>
            <person name="Barry K."/>
            <person name="Detter J.C."/>
            <person name="Glavina del Rio T."/>
            <person name="Hammon N."/>
            <person name="Israni S."/>
            <person name="Dalin E."/>
            <person name="Tice H."/>
            <person name="Pitluck S."/>
            <person name="Di Bartolo G."/>
            <person name="Chain P."/>
            <person name="Malfatti S."/>
            <person name="Shin M."/>
            <person name="Vergez L."/>
            <person name="Schmutz J."/>
            <person name="Larimer F."/>
            <person name="Land M."/>
            <person name="Hauser L."/>
            <person name="Worsham P."/>
            <person name="Chu M."/>
            <person name="Bearden S."/>
            <person name="Garcia E."/>
            <person name="Richardson P."/>
        </authorList>
    </citation>
    <scope>NUCLEOTIDE SEQUENCE [LARGE SCALE GENOMIC DNA]</scope>
    <source>
        <strain>Pestoides F</strain>
    </source>
</reference>
<sequence length="129" mass="14532">MRHRKSGRQLNRNSSHRQAMFRNMAGSLVRHEIIKTTLPKAKELRRVVEPLITLAKTDNVANRRLAFARTRDNEIVAKLFNELGPRFASRAGGYTRILKCGFRAGDNAPMAYIELVDRAASQAEVVAAE</sequence>
<organism>
    <name type="scientific">Yersinia pestis (strain Pestoides F)</name>
    <dbReference type="NCBI Taxonomy" id="386656"/>
    <lineage>
        <taxon>Bacteria</taxon>
        <taxon>Pseudomonadati</taxon>
        <taxon>Pseudomonadota</taxon>
        <taxon>Gammaproteobacteria</taxon>
        <taxon>Enterobacterales</taxon>
        <taxon>Yersiniaceae</taxon>
        <taxon>Yersinia</taxon>
    </lineage>
</organism>
<name>RL17_YERPP</name>
<proteinExistence type="inferred from homology"/>
<protein>
    <recommendedName>
        <fullName evidence="1">Large ribosomal subunit protein bL17</fullName>
    </recommendedName>
    <alternativeName>
        <fullName evidence="2">50S ribosomal protein L17</fullName>
    </alternativeName>
</protein>
<comment type="subunit">
    <text evidence="1">Part of the 50S ribosomal subunit. Contacts protein L32.</text>
</comment>
<comment type="similarity">
    <text evidence="1">Belongs to the bacterial ribosomal protein bL17 family.</text>
</comment>
<gene>
    <name evidence="1" type="primary">rplQ</name>
    <name type="ordered locus">YPDSF_0157</name>
</gene>
<accession>A4TH16</accession>
<keyword id="KW-0687">Ribonucleoprotein</keyword>
<keyword id="KW-0689">Ribosomal protein</keyword>
<evidence type="ECO:0000255" key="1">
    <source>
        <dbReference type="HAMAP-Rule" id="MF_01368"/>
    </source>
</evidence>
<evidence type="ECO:0000305" key="2"/>
<feature type="chain" id="PRO_1000055996" description="Large ribosomal subunit protein bL17">
    <location>
        <begin position="1"/>
        <end position="129"/>
    </location>
</feature>